<proteinExistence type="evidence at transcript level"/>
<comment type="alternative products">
    <event type="alternative splicing"/>
    <isoform>
        <id>Q93ZX6-1</id>
        <name>1</name>
        <sequence type="displayed"/>
    </isoform>
    <text>A number of isoforms are produced. According to EST sequences.</text>
</comment>
<comment type="sequence caution" evidence="2">
    <conflict type="erroneous gene model prediction">
        <sequence resource="EMBL-CDS" id="CAB88307"/>
    </conflict>
</comment>
<protein>
    <recommendedName>
        <fullName>F-box/LRR-repeat protein At3g58900</fullName>
    </recommendedName>
</protein>
<name>FBL57_ARATH</name>
<accession>Q93ZX6</accession>
<accession>Q9LXR2</accession>
<dbReference type="EMBL" id="AL353032">
    <property type="protein sequence ID" value="CAB88307.1"/>
    <property type="status" value="ALT_SEQ"/>
    <property type="molecule type" value="Genomic_DNA"/>
</dbReference>
<dbReference type="EMBL" id="CP002686">
    <property type="protein sequence ID" value="AEE79845.1"/>
    <property type="molecule type" value="Genomic_DNA"/>
</dbReference>
<dbReference type="EMBL" id="CP002686">
    <property type="protein sequence ID" value="AEE79846.1"/>
    <property type="molecule type" value="Genomic_DNA"/>
</dbReference>
<dbReference type="EMBL" id="AY056203">
    <property type="protein sequence ID" value="AAL07052.1"/>
    <property type="molecule type" value="mRNA"/>
</dbReference>
<dbReference type="EMBL" id="AY091395">
    <property type="protein sequence ID" value="AAM14334.1"/>
    <property type="molecule type" value="mRNA"/>
</dbReference>
<dbReference type="PIR" id="T49173">
    <property type="entry name" value="T49173"/>
</dbReference>
<dbReference type="RefSeq" id="NP_001030885.1">
    <molecule id="Q93ZX6-1"/>
    <property type="nucleotide sequence ID" value="NM_001035808.1"/>
</dbReference>
<dbReference type="RefSeq" id="NP_567075.1">
    <molecule id="Q93ZX6-1"/>
    <property type="nucleotide sequence ID" value="NM_115752.2"/>
</dbReference>
<dbReference type="FunCoup" id="Q93ZX6">
    <property type="interactions" value="79"/>
</dbReference>
<dbReference type="PaxDb" id="3702-AT3G58900.4"/>
<dbReference type="EnsemblPlants" id="AT3G58900.1">
    <molecule id="Q93ZX6-1"/>
    <property type="protein sequence ID" value="AT3G58900.1"/>
    <property type="gene ID" value="AT3G58900"/>
</dbReference>
<dbReference type="EnsemblPlants" id="AT3G58900.2">
    <molecule id="Q93ZX6-1"/>
    <property type="protein sequence ID" value="AT3G58900.2"/>
    <property type="gene ID" value="AT3G58900"/>
</dbReference>
<dbReference type="GeneID" id="825059"/>
<dbReference type="Gramene" id="AT3G58900.1">
    <molecule id="Q93ZX6-1"/>
    <property type="protein sequence ID" value="AT3G58900.1"/>
    <property type="gene ID" value="AT3G58900"/>
</dbReference>
<dbReference type="Gramene" id="AT3G58900.2">
    <molecule id="Q93ZX6-1"/>
    <property type="protein sequence ID" value="AT3G58900.2"/>
    <property type="gene ID" value="AT3G58900"/>
</dbReference>
<dbReference type="KEGG" id="ath:AT3G58900"/>
<dbReference type="Araport" id="AT3G58900"/>
<dbReference type="TAIR" id="AT3G58900"/>
<dbReference type="InParanoid" id="Q93ZX6"/>
<dbReference type="PhylomeDB" id="Q93ZX6"/>
<dbReference type="PRO" id="PR:Q93ZX6"/>
<dbReference type="Proteomes" id="UP000006548">
    <property type="component" value="Chromosome 3"/>
</dbReference>
<dbReference type="ExpressionAtlas" id="Q93ZX6">
    <property type="expression patterns" value="baseline and differential"/>
</dbReference>
<dbReference type="CDD" id="cd22160">
    <property type="entry name" value="F-box_AtFBL13-like"/>
    <property type="match status" value="1"/>
</dbReference>
<dbReference type="Gene3D" id="1.20.1280.50">
    <property type="match status" value="1"/>
</dbReference>
<dbReference type="Gene3D" id="3.80.10.10">
    <property type="entry name" value="Ribonuclease Inhibitor"/>
    <property type="match status" value="1"/>
</dbReference>
<dbReference type="InterPro" id="IPR036047">
    <property type="entry name" value="F-box-like_dom_sf"/>
</dbReference>
<dbReference type="InterPro" id="IPR053781">
    <property type="entry name" value="F-box_AtFBL13-like"/>
</dbReference>
<dbReference type="InterPro" id="IPR001810">
    <property type="entry name" value="F-box_dom"/>
</dbReference>
<dbReference type="InterPro" id="IPR055294">
    <property type="entry name" value="FBL60-like"/>
</dbReference>
<dbReference type="InterPro" id="IPR032675">
    <property type="entry name" value="LRR_dom_sf"/>
</dbReference>
<dbReference type="InterPro" id="IPR055411">
    <property type="entry name" value="LRR_FXL15/At3g58940/PEG3-like"/>
</dbReference>
<dbReference type="PANTHER" id="PTHR31293">
    <property type="entry name" value="RNI-LIKE SUPERFAMILY PROTEIN"/>
    <property type="match status" value="1"/>
</dbReference>
<dbReference type="PANTHER" id="PTHR31293:SF16">
    <property type="entry name" value="RNI-LIKE SUPERFAMILY PROTEIN"/>
    <property type="match status" value="1"/>
</dbReference>
<dbReference type="Pfam" id="PF00646">
    <property type="entry name" value="F-box"/>
    <property type="match status" value="1"/>
</dbReference>
<dbReference type="Pfam" id="PF24758">
    <property type="entry name" value="LRR_At5g56370"/>
    <property type="match status" value="1"/>
</dbReference>
<dbReference type="SMART" id="SM00256">
    <property type="entry name" value="FBOX"/>
    <property type="match status" value="1"/>
</dbReference>
<dbReference type="SUPFAM" id="SSF81383">
    <property type="entry name" value="F-box domain"/>
    <property type="match status" value="1"/>
</dbReference>
<dbReference type="SUPFAM" id="SSF52047">
    <property type="entry name" value="RNI-like"/>
    <property type="match status" value="1"/>
</dbReference>
<dbReference type="PROSITE" id="PS50181">
    <property type="entry name" value="FBOX"/>
    <property type="match status" value="1"/>
</dbReference>
<gene>
    <name type="ordered locus">At3g58900</name>
    <name type="ORF">T20N10.250</name>
</gene>
<sequence length="327" mass="37470">MDLFSSLPNELLYHILSFLSTKEAALTSVLSKRWRNLFAFVPYLEFDDSVFLHPEERKREKEGILQSFMDFVDRVLDLHGDSLIKTFSLKCKTGVDSDHVDRWICNVLARGVSDLDLFIDFRDLYSLPHEVGVSRTLVVLRVGSESDLYWWQKFLCLPMLKTLVLDSCWLCIGQFQILLLACPALEELDMTNTRWKDSNVTVSSSILKELTIDLHGCCSVVNLKSLSFDAPSLVYFYYCDSLAEDYPQVNLKNLVEAQINLLLTQAQIEQVRALNNEMLVADDVFPGLGNAWKLITGLRNVQQLYLSPDTLEVSFLSLVYFWLVGRI</sequence>
<evidence type="ECO:0000255" key="1">
    <source>
        <dbReference type="PROSITE-ProRule" id="PRU00080"/>
    </source>
</evidence>
<evidence type="ECO:0000305" key="2"/>
<feature type="chain" id="PRO_0000281958" description="F-box/LRR-repeat protein At3g58900">
    <location>
        <begin position="1"/>
        <end position="327"/>
    </location>
</feature>
<feature type="domain" description="F-box" evidence="1">
    <location>
        <begin position="1"/>
        <end position="47"/>
    </location>
</feature>
<feature type="repeat" description="LRR 1">
    <location>
        <begin position="116"/>
        <end position="144"/>
    </location>
</feature>
<feature type="repeat" description="LRR 2">
    <location>
        <begin position="161"/>
        <end position="192"/>
    </location>
</feature>
<feature type="repeat" description="LRR 3">
    <location>
        <begin position="199"/>
        <end position="230"/>
    </location>
</feature>
<feature type="repeat" description="LRR 4">
    <location>
        <begin position="235"/>
        <end position="261"/>
    </location>
</feature>
<feature type="repeat" description="LRR 5">
    <location>
        <begin position="277"/>
        <end position="308"/>
    </location>
</feature>
<reference key="1">
    <citation type="journal article" date="2000" name="Nature">
        <title>Sequence and analysis of chromosome 3 of the plant Arabidopsis thaliana.</title>
        <authorList>
            <person name="Salanoubat M."/>
            <person name="Lemcke K."/>
            <person name="Rieger M."/>
            <person name="Ansorge W."/>
            <person name="Unseld M."/>
            <person name="Fartmann B."/>
            <person name="Valle G."/>
            <person name="Bloecker H."/>
            <person name="Perez-Alonso M."/>
            <person name="Obermaier B."/>
            <person name="Delseny M."/>
            <person name="Boutry M."/>
            <person name="Grivell L.A."/>
            <person name="Mache R."/>
            <person name="Puigdomenech P."/>
            <person name="De Simone V."/>
            <person name="Choisne N."/>
            <person name="Artiguenave F."/>
            <person name="Robert C."/>
            <person name="Brottier P."/>
            <person name="Wincker P."/>
            <person name="Cattolico L."/>
            <person name="Weissenbach J."/>
            <person name="Saurin W."/>
            <person name="Quetier F."/>
            <person name="Schaefer M."/>
            <person name="Mueller-Auer S."/>
            <person name="Gabel C."/>
            <person name="Fuchs M."/>
            <person name="Benes V."/>
            <person name="Wurmbach E."/>
            <person name="Drzonek H."/>
            <person name="Erfle H."/>
            <person name="Jordan N."/>
            <person name="Bangert S."/>
            <person name="Wiedelmann R."/>
            <person name="Kranz H."/>
            <person name="Voss H."/>
            <person name="Holland R."/>
            <person name="Brandt P."/>
            <person name="Nyakatura G."/>
            <person name="Vezzi A."/>
            <person name="D'Angelo M."/>
            <person name="Pallavicini A."/>
            <person name="Toppo S."/>
            <person name="Simionati B."/>
            <person name="Conrad A."/>
            <person name="Hornischer K."/>
            <person name="Kauer G."/>
            <person name="Loehnert T.-H."/>
            <person name="Nordsiek G."/>
            <person name="Reichelt J."/>
            <person name="Scharfe M."/>
            <person name="Schoen O."/>
            <person name="Bargues M."/>
            <person name="Terol J."/>
            <person name="Climent J."/>
            <person name="Navarro P."/>
            <person name="Collado C."/>
            <person name="Perez-Perez A."/>
            <person name="Ottenwaelder B."/>
            <person name="Duchemin D."/>
            <person name="Cooke R."/>
            <person name="Laudie M."/>
            <person name="Berger-Llauro C."/>
            <person name="Purnelle B."/>
            <person name="Masuy D."/>
            <person name="de Haan M."/>
            <person name="Maarse A.C."/>
            <person name="Alcaraz J.-P."/>
            <person name="Cottet A."/>
            <person name="Casacuberta E."/>
            <person name="Monfort A."/>
            <person name="Argiriou A."/>
            <person name="Flores M."/>
            <person name="Liguori R."/>
            <person name="Vitale D."/>
            <person name="Mannhaupt G."/>
            <person name="Haase D."/>
            <person name="Schoof H."/>
            <person name="Rudd S."/>
            <person name="Zaccaria P."/>
            <person name="Mewes H.-W."/>
            <person name="Mayer K.F.X."/>
            <person name="Kaul S."/>
            <person name="Town C.D."/>
            <person name="Koo H.L."/>
            <person name="Tallon L.J."/>
            <person name="Jenkins J."/>
            <person name="Rooney T."/>
            <person name="Rizzo M."/>
            <person name="Walts A."/>
            <person name="Utterback T."/>
            <person name="Fujii C.Y."/>
            <person name="Shea T.P."/>
            <person name="Creasy T.H."/>
            <person name="Haas B."/>
            <person name="Maiti R."/>
            <person name="Wu D."/>
            <person name="Peterson J."/>
            <person name="Van Aken S."/>
            <person name="Pai G."/>
            <person name="Militscher J."/>
            <person name="Sellers P."/>
            <person name="Gill J.E."/>
            <person name="Feldblyum T.V."/>
            <person name="Preuss D."/>
            <person name="Lin X."/>
            <person name="Nierman W.C."/>
            <person name="Salzberg S.L."/>
            <person name="White O."/>
            <person name="Venter J.C."/>
            <person name="Fraser C.M."/>
            <person name="Kaneko T."/>
            <person name="Nakamura Y."/>
            <person name="Sato S."/>
            <person name="Kato T."/>
            <person name="Asamizu E."/>
            <person name="Sasamoto S."/>
            <person name="Kimura T."/>
            <person name="Idesawa K."/>
            <person name="Kawashima K."/>
            <person name="Kishida Y."/>
            <person name="Kiyokawa C."/>
            <person name="Kohara M."/>
            <person name="Matsumoto M."/>
            <person name="Matsuno A."/>
            <person name="Muraki A."/>
            <person name="Nakayama S."/>
            <person name="Nakazaki N."/>
            <person name="Shinpo S."/>
            <person name="Takeuchi C."/>
            <person name="Wada T."/>
            <person name="Watanabe A."/>
            <person name="Yamada M."/>
            <person name="Yasuda M."/>
            <person name="Tabata S."/>
        </authorList>
    </citation>
    <scope>NUCLEOTIDE SEQUENCE [LARGE SCALE GENOMIC DNA]</scope>
    <source>
        <strain>cv. Columbia</strain>
    </source>
</reference>
<reference key="2">
    <citation type="journal article" date="2017" name="Plant J.">
        <title>Araport11: a complete reannotation of the Arabidopsis thaliana reference genome.</title>
        <authorList>
            <person name="Cheng C.Y."/>
            <person name="Krishnakumar V."/>
            <person name="Chan A.P."/>
            <person name="Thibaud-Nissen F."/>
            <person name="Schobel S."/>
            <person name="Town C.D."/>
        </authorList>
    </citation>
    <scope>GENOME REANNOTATION</scope>
    <source>
        <strain>cv. Columbia</strain>
    </source>
</reference>
<reference key="3">
    <citation type="journal article" date="2003" name="Science">
        <title>Empirical analysis of transcriptional activity in the Arabidopsis genome.</title>
        <authorList>
            <person name="Yamada K."/>
            <person name="Lim J."/>
            <person name="Dale J.M."/>
            <person name="Chen H."/>
            <person name="Shinn P."/>
            <person name="Palm C.J."/>
            <person name="Southwick A.M."/>
            <person name="Wu H.C."/>
            <person name="Kim C.J."/>
            <person name="Nguyen M."/>
            <person name="Pham P.K."/>
            <person name="Cheuk R.F."/>
            <person name="Karlin-Newmann G."/>
            <person name="Liu S.X."/>
            <person name="Lam B."/>
            <person name="Sakano H."/>
            <person name="Wu T."/>
            <person name="Yu G."/>
            <person name="Miranda M."/>
            <person name="Quach H.L."/>
            <person name="Tripp M."/>
            <person name="Chang C.H."/>
            <person name="Lee J.M."/>
            <person name="Toriumi M.J."/>
            <person name="Chan M.M."/>
            <person name="Tang C.C."/>
            <person name="Onodera C.S."/>
            <person name="Deng J.M."/>
            <person name="Akiyama K."/>
            <person name="Ansari Y."/>
            <person name="Arakawa T."/>
            <person name="Banh J."/>
            <person name="Banno F."/>
            <person name="Bowser L."/>
            <person name="Brooks S.Y."/>
            <person name="Carninci P."/>
            <person name="Chao Q."/>
            <person name="Choy N."/>
            <person name="Enju A."/>
            <person name="Goldsmith A.D."/>
            <person name="Gurjal M."/>
            <person name="Hansen N.F."/>
            <person name="Hayashizaki Y."/>
            <person name="Johnson-Hopson C."/>
            <person name="Hsuan V.W."/>
            <person name="Iida K."/>
            <person name="Karnes M."/>
            <person name="Khan S."/>
            <person name="Koesema E."/>
            <person name="Ishida J."/>
            <person name="Jiang P.X."/>
            <person name="Jones T."/>
            <person name="Kawai J."/>
            <person name="Kamiya A."/>
            <person name="Meyers C."/>
            <person name="Nakajima M."/>
            <person name="Narusaka M."/>
            <person name="Seki M."/>
            <person name="Sakurai T."/>
            <person name="Satou M."/>
            <person name="Tamse R."/>
            <person name="Vaysberg M."/>
            <person name="Wallender E.K."/>
            <person name="Wong C."/>
            <person name="Yamamura Y."/>
            <person name="Yuan S."/>
            <person name="Shinozaki K."/>
            <person name="Davis R.W."/>
            <person name="Theologis A."/>
            <person name="Ecker J.R."/>
        </authorList>
    </citation>
    <scope>NUCLEOTIDE SEQUENCE [LARGE SCALE MRNA]</scope>
    <source>
        <strain>cv. Columbia</strain>
    </source>
</reference>
<organism>
    <name type="scientific">Arabidopsis thaliana</name>
    <name type="common">Mouse-ear cress</name>
    <dbReference type="NCBI Taxonomy" id="3702"/>
    <lineage>
        <taxon>Eukaryota</taxon>
        <taxon>Viridiplantae</taxon>
        <taxon>Streptophyta</taxon>
        <taxon>Embryophyta</taxon>
        <taxon>Tracheophyta</taxon>
        <taxon>Spermatophyta</taxon>
        <taxon>Magnoliopsida</taxon>
        <taxon>eudicotyledons</taxon>
        <taxon>Gunneridae</taxon>
        <taxon>Pentapetalae</taxon>
        <taxon>rosids</taxon>
        <taxon>malvids</taxon>
        <taxon>Brassicales</taxon>
        <taxon>Brassicaceae</taxon>
        <taxon>Camelineae</taxon>
        <taxon>Arabidopsis</taxon>
    </lineage>
</organism>
<keyword id="KW-0025">Alternative splicing</keyword>
<keyword id="KW-0433">Leucine-rich repeat</keyword>
<keyword id="KW-1185">Reference proteome</keyword>
<keyword id="KW-0677">Repeat</keyword>